<organism>
    <name type="scientific">Pseudomonas savastanoi pv. phaseolicola (strain 1448A / Race 6)</name>
    <name type="common">Pseudomonas syringae pv. phaseolicola (strain 1448A / Race 6)</name>
    <dbReference type="NCBI Taxonomy" id="264730"/>
    <lineage>
        <taxon>Bacteria</taxon>
        <taxon>Pseudomonadati</taxon>
        <taxon>Pseudomonadota</taxon>
        <taxon>Gammaproteobacteria</taxon>
        <taxon>Pseudomonadales</taxon>
        <taxon>Pseudomonadaceae</taxon>
        <taxon>Pseudomonas</taxon>
    </lineage>
</organism>
<comment type="catalytic activity">
    <reaction evidence="1">
        <text>L-citrulline + L-aspartate + ATP = 2-(N(omega)-L-arginino)succinate + AMP + diphosphate + H(+)</text>
        <dbReference type="Rhea" id="RHEA:10932"/>
        <dbReference type="ChEBI" id="CHEBI:15378"/>
        <dbReference type="ChEBI" id="CHEBI:29991"/>
        <dbReference type="ChEBI" id="CHEBI:30616"/>
        <dbReference type="ChEBI" id="CHEBI:33019"/>
        <dbReference type="ChEBI" id="CHEBI:57472"/>
        <dbReference type="ChEBI" id="CHEBI:57743"/>
        <dbReference type="ChEBI" id="CHEBI:456215"/>
        <dbReference type="EC" id="6.3.4.5"/>
    </reaction>
</comment>
<comment type="pathway">
    <text evidence="1">Amino-acid biosynthesis; L-arginine biosynthesis; L-arginine from L-ornithine and carbamoyl phosphate: step 2/3.</text>
</comment>
<comment type="subunit">
    <text evidence="1">Homotetramer.</text>
</comment>
<comment type="subcellular location">
    <subcellularLocation>
        <location evidence="1">Cytoplasm</location>
    </subcellularLocation>
</comment>
<comment type="similarity">
    <text evidence="1">Belongs to the argininosuccinate synthase family. Type 1 subfamily.</text>
</comment>
<protein>
    <recommendedName>
        <fullName evidence="1">Argininosuccinate synthase</fullName>
        <ecNumber evidence="1">6.3.4.5</ecNumber>
    </recommendedName>
    <alternativeName>
        <fullName evidence="1">Citrulline--aspartate ligase</fullName>
    </alternativeName>
</protein>
<gene>
    <name evidence="1" type="primary">argG</name>
    <name type="ordered locus">PSPPH_3886</name>
</gene>
<name>ASSY_PSE14</name>
<evidence type="ECO:0000255" key="1">
    <source>
        <dbReference type="HAMAP-Rule" id="MF_00005"/>
    </source>
</evidence>
<sequence length="405" mass="45370">MADVNKVVLAYSGGLDTSVILKWLQDTYNCEVVTFTADLGQGEEVEPARAKAQAMGVKEIYIDDLREEFVRDFVFPMFRANTVYEGEYLLGTSIARPLIAKRLIEIANETGADAISHGATGKGNDQVRFELGAYALKPGVKVIAPWREWDLLSREKLMDYAEKHNIPIERHGKKKSPYSMDANLLHISYEGGVLEDTWTEHEEDMWRWTKSPEDAPNVATYLELTYRNGDIVALDGVEMTPATVLATLNRIGGENGIGRLDIVENRYVGMKSRGCYETPGGTIMLRAHRAIESITLDREVAHLKDELMAKYASLIYTGYWWSPERLMLQQMIDASQAHVNGVVRLKLYKGNVIVTGRKSDDSLFDANIATFEDDAGAYDQADAAGFIKLNALRMRIAANKGRKLF</sequence>
<feature type="chain" id="PRO_0000263956" description="Argininosuccinate synthase">
    <location>
        <begin position="1"/>
        <end position="405"/>
    </location>
</feature>
<feature type="binding site" evidence="1">
    <location>
        <begin position="10"/>
        <end position="18"/>
    </location>
    <ligand>
        <name>ATP</name>
        <dbReference type="ChEBI" id="CHEBI:30616"/>
    </ligand>
</feature>
<feature type="binding site" evidence="1">
    <location>
        <position position="37"/>
    </location>
    <ligand>
        <name>ATP</name>
        <dbReference type="ChEBI" id="CHEBI:30616"/>
    </ligand>
</feature>
<feature type="binding site" evidence="1">
    <location>
        <position position="88"/>
    </location>
    <ligand>
        <name>L-citrulline</name>
        <dbReference type="ChEBI" id="CHEBI:57743"/>
    </ligand>
</feature>
<feature type="binding site" evidence="1">
    <location>
        <position position="93"/>
    </location>
    <ligand>
        <name>L-citrulline</name>
        <dbReference type="ChEBI" id="CHEBI:57743"/>
    </ligand>
</feature>
<feature type="binding site" evidence="1">
    <location>
        <position position="118"/>
    </location>
    <ligand>
        <name>ATP</name>
        <dbReference type="ChEBI" id="CHEBI:30616"/>
    </ligand>
</feature>
<feature type="binding site" evidence="1">
    <location>
        <position position="120"/>
    </location>
    <ligand>
        <name>L-aspartate</name>
        <dbReference type="ChEBI" id="CHEBI:29991"/>
    </ligand>
</feature>
<feature type="binding site" evidence="1">
    <location>
        <position position="124"/>
    </location>
    <ligand>
        <name>L-aspartate</name>
        <dbReference type="ChEBI" id="CHEBI:29991"/>
    </ligand>
</feature>
<feature type="binding site" evidence="1">
    <location>
        <position position="124"/>
    </location>
    <ligand>
        <name>L-citrulline</name>
        <dbReference type="ChEBI" id="CHEBI:57743"/>
    </ligand>
</feature>
<feature type="binding site" evidence="1">
    <location>
        <position position="125"/>
    </location>
    <ligand>
        <name>L-aspartate</name>
        <dbReference type="ChEBI" id="CHEBI:29991"/>
    </ligand>
</feature>
<feature type="binding site" evidence="1">
    <location>
        <position position="128"/>
    </location>
    <ligand>
        <name>L-citrulline</name>
        <dbReference type="ChEBI" id="CHEBI:57743"/>
    </ligand>
</feature>
<feature type="binding site" evidence="1">
    <location>
        <position position="179"/>
    </location>
    <ligand>
        <name>L-citrulline</name>
        <dbReference type="ChEBI" id="CHEBI:57743"/>
    </ligand>
</feature>
<feature type="binding site" evidence="1">
    <location>
        <position position="188"/>
    </location>
    <ligand>
        <name>L-citrulline</name>
        <dbReference type="ChEBI" id="CHEBI:57743"/>
    </ligand>
</feature>
<feature type="binding site" evidence="1">
    <location>
        <position position="264"/>
    </location>
    <ligand>
        <name>L-citrulline</name>
        <dbReference type="ChEBI" id="CHEBI:57743"/>
    </ligand>
</feature>
<feature type="binding site" evidence="1">
    <location>
        <position position="276"/>
    </location>
    <ligand>
        <name>L-citrulline</name>
        <dbReference type="ChEBI" id="CHEBI:57743"/>
    </ligand>
</feature>
<dbReference type="EC" id="6.3.4.5" evidence="1"/>
<dbReference type="EMBL" id="CP000058">
    <property type="protein sequence ID" value="AAZ36747.1"/>
    <property type="molecule type" value="Genomic_DNA"/>
</dbReference>
<dbReference type="RefSeq" id="WP_003412906.1">
    <property type="nucleotide sequence ID" value="NC_005773.3"/>
</dbReference>
<dbReference type="SMR" id="Q48F14"/>
<dbReference type="KEGG" id="psp:PSPPH_3886"/>
<dbReference type="eggNOG" id="COG0137">
    <property type="taxonomic scope" value="Bacteria"/>
</dbReference>
<dbReference type="HOGENOM" id="CLU_032784_4_2_6"/>
<dbReference type="UniPathway" id="UPA00068">
    <property type="reaction ID" value="UER00113"/>
</dbReference>
<dbReference type="Proteomes" id="UP000000551">
    <property type="component" value="Chromosome"/>
</dbReference>
<dbReference type="GO" id="GO:0005737">
    <property type="term" value="C:cytoplasm"/>
    <property type="evidence" value="ECO:0007669"/>
    <property type="project" value="UniProtKB-SubCell"/>
</dbReference>
<dbReference type="GO" id="GO:0004055">
    <property type="term" value="F:argininosuccinate synthase activity"/>
    <property type="evidence" value="ECO:0007669"/>
    <property type="project" value="UniProtKB-UniRule"/>
</dbReference>
<dbReference type="GO" id="GO:0005524">
    <property type="term" value="F:ATP binding"/>
    <property type="evidence" value="ECO:0007669"/>
    <property type="project" value="UniProtKB-UniRule"/>
</dbReference>
<dbReference type="GO" id="GO:0000053">
    <property type="term" value="P:argininosuccinate metabolic process"/>
    <property type="evidence" value="ECO:0007669"/>
    <property type="project" value="TreeGrafter"/>
</dbReference>
<dbReference type="GO" id="GO:0006526">
    <property type="term" value="P:L-arginine biosynthetic process"/>
    <property type="evidence" value="ECO:0007669"/>
    <property type="project" value="UniProtKB-UniRule"/>
</dbReference>
<dbReference type="GO" id="GO:0000050">
    <property type="term" value="P:urea cycle"/>
    <property type="evidence" value="ECO:0007669"/>
    <property type="project" value="TreeGrafter"/>
</dbReference>
<dbReference type="CDD" id="cd01999">
    <property type="entry name" value="ASS"/>
    <property type="match status" value="1"/>
</dbReference>
<dbReference type="FunFam" id="1.20.5.470:FF:000001">
    <property type="entry name" value="Argininosuccinate synthase"/>
    <property type="match status" value="1"/>
</dbReference>
<dbReference type="FunFam" id="3.40.50.620:FF:000019">
    <property type="entry name" value="Argininosuccinate synthase"/>
    <property type="match status" value="1"/>
</dbReference>
<dbReference type="FunFam" id="3.90.1260.10:FF:000001">
    <property type="entry name" value="Argininosuccinate synthase"/>
    <property type="match status" value="1"/>
</dbReference>
<dbReference type="Gene3D" id="3.90.1260.10">
    <property type="entry name" value="Argininosuccinate synthetase, chain A, domain 2"/>
    <property type="match status" value="1"/>
</dbReference>
<dbReference type="Gene3D" id="3.40.50.620">
    <property type="entry name" value="HUPs"/>
    <property type="match status" value="1"/>
</dbReference>
<dbReference type="Gene3D" id="1.20.5.470">
    <property type="entry name" value="Single helix bin"/>
    <property type="match status" value="1"/>
</dbReference>
<dbReference type="HAMAP" id="MF_00005">
    <property type="entry name" value="Arg_succ_synth_type1"/>
    <property type="match status" value="1"/>
</dbReference>
<dbReference type="InterPro" id="IPR048268">
    <property type="entry name" value="Arginosuc_syn_C"/>
</dbReference>
<dbReference type="InterPro" id="IPR048267">
    <property type="entry name" value="Arginosuc_syn_N"/>
</dbReference>
<dbReference type="InterPro" id="IPR001518">
    <property type="entry name" value="Arginosuc_synth"/>
</dbReference>
<dbReference type="InterPro" id="IPR018223">
    <property type="entry name" value="Arginosuc_synth_CS"/>
</dbReference>
<dbReference type="InterPro" id="IPR023434">
    <property type="entry name" value="Arginosuc_synth_type_1_subfam"/>
</dbReference>
<dbReference type="InterPro" id="IPR024074">
    <property type="entry name" value="AS_cat/multimer_dom_body"/>
</dbReference>
<dbReference type="InterPro" id="IPR014729">
    <property type="entry name" value="Rossmann-like_a/b/a_fold"/>
</dbReference>
<dbReference type="NCBIfam" id="TIGR00032">
    <property type="entry name" value="argG"/>
    <property type="match status" value="1"/>
</dbReference>
<dbReference type="NCBIfam" id="NF001770">
    <property type="entry name" value="PRK00509.1"/>
    <property type="match status" value="1"/>
</dbReference>
<dbReference type="PANTHER" id="PTHR11587">
    <property type="entry name" value="ARGININOSUCCINATE SYNTHASE"/>
    <property type="match status" value="1"/>
</dbReference>
<dbReference type="PANTHER" id="PTHR11587:SF2">
    <property type="entry name" value="ARGININOSUCCINATE SYNTHASE"/>
    <property type="match status" value="1"/>
</dbReference>
<dbReference type="Pfam" id="PF20979">
    <property type="entry name" value="Arginosuc_syn_C"/>
    <property type="match status" value="1"/>
</dbReference>
<dbReference type="Pfam" id="PF00764">
    <property type="entry name" value="Arginosuc_synth"/>
    <property type="match status" value="1"/>
</dbReference>
<dbReference type="SUPFAM" id="SSF52402">
    <property type="entry name" value="Adenine nucleotide alpha hydrolases-like"/>
    <property type="match status" value="1"/>
</dbReference>
<dbReference type="SUPFAM" id="SSF69864">
    <property type="entry name" value="Argininosuccinate synthetase, C-terminal domain"/>
    <property type="match status" value="1"/>
</dbReference>
<dbReference type="PROSITE" id="PS00564">
    <property type="entry name" value="ARGININOSUCCIN_SYN_1"/>
    <property type="match status" value="1"/>
</dbReference>
<dbReference type="PROSITE" id="PS00565">
    <property type="entry name" value="ARGININOSUCCIN_SYN_2"/>
    <property type="match status" value="1"/>
</dbReference>
<proteinExistence type="inferred from homology"/>
<accession>Q48F14</accession>
<keyword id="KW-0028">Amino-acid biosynthesis</keyword>
<keyword id="KW-0055">Arginine biosynthesis</keyword>
<keyword id="KW-0067">ATP-binding</keyword>
<keyword id="KW-0963">Cytoplasm</keyword>
<keyword id="KW-0436">Ligase</keyword>
<keyword id="KW-0547">Nucleotide-binding</keyword>
<reference key="1">
    <citation type="journal article" date="2005" name="J. Bacteriol.">
        <title>Whole-genome sequence analysis of Pseudomonas syringae pv. phaseolicola 1448A reveals divergence among pathovars in genes involved in virulence and transposition.</title>
        <authorList>
            <person name="Joardar V."/>
            <person name="Lindeberg M."/>
            <person name="Jackson R.W."/>
            <person name="Selengut J."/>
            <person name="Dodson R."/>
            <person name="Brinkac L.M."/>
            <person name="Daugherty S.C."/>
            <person name="DeBoy R.T."/>
            <person name="Durkin A.S."/>
            <person name="Gwinn Giglio M."/>
            <person name="Madupu R."/>
            <person name="Nelson W.C."/>
            <person name="Rosovitz M.J."/>
            <person name="Sullivan S.A."/>
            <person name="Crabtree J."/>
            <person name="Creasy T."/>
            <person name="Davidsen T.M."/>
            <person name="Haft D.H."/>
            <person name="Zafar N."/>
            <person name="Zhou L."/>
            <person name="Halpin R."/>
            <person name="Holley T."/>
            <person name="Khouri H.M."/>
            <person name="Feldblyum T.V."/>
            <person name="White O."/>
            <person name="Fraser C.M."/>
            <person name="Chatterjee A.K."/>
            <person name="Cartinhour S."/>
            <person name="Schneider D."/>
            <person name="Mansfield J.W."/>
            <person name="Collmer A."/>
            <person name="Buell R."/>
        </authorList>
    </citation>
    <scope>NUCLEOTIDE SEQUENCE [LARGE SCALE GENOMIC DNA]</scope>
    <source>
        <strain>1448A / Race 6</strain>
    </source>
</reference>